<protein>
    <recommendedName>
        <fullName evidence="1">Endoribonuclease YbeY</fullName>
        <ecNumber evidence="1">3.1.-.-</ecNumber>
    </recommendedName>
</protein>
<reference key="1">
    <citation type="journal article" date="2005" name="J. Bacteriol.">
        <title>Completion of the genome sequence of Brucella abortus and comparison to the highly similar genomes of Brucella melitensis and Brucella suis.</title>
        <authorList>
            <person name="Halling S.M."/>
            <person name="Peterson-Burch B.D."/>
            <person name="Bricker B.J."/>
            <person name="Zuerner R.L."/>
            <person name="Qing Z."/>
            <person name="Li L.-L."/>
            <person name="Kapur V."/>
            <person name="Alt D.P."/>
            <person name="Olsen S.C."/>
        </authorList>
    </citation>
    <scope>NUCLEOTIDE SEQUENCE [LARGE SCALE GENOMIC DNA]</scope>
    <source>
        <strain>9-941</strain>
    </source>
</reference>
<dbReference type="EC" id="3.1.-.-" evidence="1"/>
<dbReference type="EMBL" id="AE017223">
    <property type="protein sequence ID" value="AAX75425.1"/>
    <property type="status" value="ALT_INIT"/>
    <property type="molecule type" value="Genomic_DNA"/>
</dbReference>
<dbReference type="SMR" id="Q57AA9"/>
<dbReference type="EnsemblBacteria" id="AAX75425">
    <property type="protein sequence ID" value="AAX75425"/>
    <property type="gene ID" value="BruAb1_2129"/>
</dbReference>
<dbReference type="KEGG" id="bmb:BruAb1_2129"/>
<dbReference type="HOGENOM" id="CLU_106710_0_0_5"/>
<dbReference type="Proteomes" id="UP000000540">
    <property type="component" value="Chromosome I"/>
</dbReference>
<dbReference type="GO" id="GO:0005737">
    <property type="term" value="C:cytoplasm"/>
    <property type="evidence" value="ECO:0007669"/>
    <property type="project" value="UniProtKB-SubCell"/>
</dbReference>
<dbReference type="GO" id="GO:0004222">
    <property type="term" value="F:metalloendopeptidase activity"/>
    <property type="evidence" value="ECO:0007669"/>
    <property type="project" value="InterPro"/>
</dbReference>
<dbReference type="GO" id="GO:0004521">
    <property type="term" value="F:RNA endonuclease activity"/>
    <property type="evidence" value="ECO:0007669"/>
    <property type="project" value="UniProtKB-UniRule"/>
</dbReference>
<dbReference type="GO" id="GO:0008270">
    <property type="term" value="F:zinc ion binding"/>
    <property type="evidence" value="ECO:0007669"/>
    <property type="project" value="UniProtKB-UniRule"/>
</dbReference>
<dbReference type="GO" id="GO:0006364">
    <property type="term" value="P:rRNA processing"/>
    <property type="evidence" value="ECO:0007669"/>
    <property type="project" value="UniProtKB-UniRule"/>
</dbReference>
<dbReference type="Gene3D" id="3.40.390.30">
    <property type="entry name" value="Metalloproteases ('zincins'), catalytic domain"/>
    <property type="match status" value="1"/>
</dbReference>
<dbReference type="HAMAP" id="MF_00009">
    <property type="entry name" value="Endoribonucl_YbeY"/>
    <property type="match status" value="1"/>
</dbReference>
<dbReference type="InterPro" id="IPR023091">
    <property type="entry name" value="MetalPrtase_cat_dom_sf_prd"/>
</dbReference>
<dbReference type="InterPro" id="IPR002036">
    <property type="entry name" value="YbeY"/>
</dbReference>
<dbReference type="InterPro" id="IPR020549">
    <property type="entry name" value="YbeY_CS"/>
</dbReference>
<dbReference type="NCBIfam" id="TIGR00043">
    <property type="entry name" value="rRNA maturation RNase YbeY"/>
    <property type="match status" value="1"/>
</dbReference>
<dbReference type="PANTHER" id="PTHR46986">
    <property type="entry name" value="ENDORIBONUCLEASE YBEY, CHLOROPLASTIC"/>
    <property type="match status" value="1"/>
</dbReference>
<dbReference type="PANTHER" id="PTHR46986:SF1">
    <property type="entry name" value="ENDORIBONUCLEASE YBEY, CHLOROPLASTIC"/>
    <property type="match status" value="1"/>
</dbReference>
<dbReference type="Pfam" id="PF02130">
    <property type="entry name" value="YbeY"/>
    <property type="match status" value="1"/>
</dbReference>
<dbReference type="SUPFAM" id="SSF55486">
    <property type="entry name" value="Metalloproteases ('zincins'), catalytic domain"/>
    <property type="match status" value="1"/>
</dbReference>
<dbReference type="PROSITE" id="PS01306">
    <property type="entry name" value="UPF0054"/>
    <property type="match status" value="1"/>
</dbReference>
<feature type="chain" id="PRO_0000284169" description="Endoribonuclease YbeY">
    <location>
        <begin position="1"/>
        <end position="168"/>
    </location>
</feature>
<feature type="binding site" evidence="1">
    <location>
        <position position="122"/>
    </location>
    <ligand>
        <name>Zn(2+)</name>
        <dbReference type="ChEBI" id="CHEBI:29105"/>
        <note>catalytic</note>
    </ligand>
</feature>
<feature type="binding site" evidence="1">
    <location>
        <position position="126"/>
    </location>
    <ligand>
        <name>Zn(2+)</name>
        <dbReference type="ChEBI" id="CHEBI:29105"/>
        <note>catalytic</note>
    </ligand>
</feature>
<feature type="binding site" evidence="1">
    <location>
        <position position="132"/>
    </location>
    <ligand>
        <name>Zn(2+)</name>
        <dbReference type="ChEBI" id="CHEBI:29105"/>
        <note>catalytic</note>
    </ligand>
</feature>
<accession>Q57AA9</accession>
<name>YBEY_BRUAB</name>
<keyword id="KW-0963">Cytoplasm</keyword>
<keyword id="KW-0255">Endonuclease</keyword>
<keyword id="KW-0378">Hydrolase</keyword>
<keyword id="KW-0479">Metal-binding</keyword>
<keyword id="KW-0540">Nuclease</keyword>
<keyword id="KW-0690">Ribosome biogenesis</keyword>
<keyword id="KW-0698">rRNA processing</keyword>
<keyword id="KW-0862">Zinc</keyword>
<comment type="function">
    <text evidence="1">Single strand-specific metallo-endoribonuclease involved in late-stage 70S ribosome quality control and in maturation of the 3' terminus of the 16S rRNA.</text>
</comment>
<comment type="cofactor">
    <cofactor evidence="1">
        <name>Zn(2+)</name>
        <dbReference type="ChEBI" id="CHEBI:29105"/>
    </cofactor>
    <text evidence="1">Binds 1 zinc ion.</text>
</comment>
<comment type="subcellular location">
    <subcellularLocation>
        <location evidence="1">Cytoplasm</location>
    </subcellularLocation>
</comment>
<comment type="similarity">
    <text evidence="1">Belongs to the endoribonuclease YbeY family.</text>
</comment>
<comment type="sequence caution" evidence="2">
    <conflict type="erroneous initiation">
        <sequence resource="EMBL-CDS" id="AAX75425"/>
    </conflict>
</comment>
<organism>
    <name type="scientific">Brucella abortus biovar 1 (strain 9-941)</name>
    <dbReference type="NCBI Taxonomy" id="262698"/>
    <lineage>
        <taxon>Bacteria</taxon>
        <taxon>Pseudomonadati</taxon>
        <taxon>Pseudomonadota</taxon>
        <taxon>Alphaproteobacteria</taxon>
        <taxon>Hyphomicrobiales</taxon>
        <taxon>Brucellaceae</taxon>
        <taxon>Brucella/Ochrobactrum group</taxon>
        <taxon>Brucella</taxon>
    </lineage>
</organism>
<evidence type="ECO:0000255" key="1">
    <source>
        <dbReference type="HAMAP-Rule" id="MF_00009"/>
    </source>
</evidence>
<evidence type="ECO:0000305" key="2"/>
<proteinExistence type="inferred from homology"/>
<sequence>MSDNAIHIDIMIEAGNWPDEASLESLVSKSVAAAWNNLGLKSATSELSVVFTDDASIQLLNGEWRGKDKPTNVLSFPAFPVKAGSQPGPMLGDIVIARETVEREAKEEGKPIENHLSHLVVHGFLHLLGYDHETDEEAEVMEAREREILHALAIPDPYAVSDEDINND</sequence>
<gene>
    <name evidence="1" type="primary">ybeY</name>
    <name type="ordered locus">BruAb1_2129</name>
</gene>